<feature type="chain" id="PRO_1000189722" description="Zinc transport protein ZntB">
    <location>
        <begin position="1"/>
        <end position="327"/>
    </location>
</feature>
<feature type="topological domain" description="Cytoplasmic" evidence="1">
    <location>
        <begin position="1"/>
        <end position="273"/>
    </location>
</feature>
<feature type="transmembrane region" description="Helical" evidence="1">
    <location>
        <begin position="274"/>
        <end position="294"/>
    </location>
</feature>
<feature type="topological domain" description="Periplasmic" evidence="1">
    <location>
        <begin position="295"/>
        <end position="300"/>
    </location>
</feature>
<feature type="transmembrane region" description="Helical" evidence="1">
    <location>
        <begin position="301"/>
        <end position="321"/>
    </location>
</feature>
<feature type="topological domain" description="Cytoplasmic" evidence="1">
    <location>
        <begin position="322"/>
        <end position="327"/>
    </location>
</feature>
<dbReference type="EMBL" id="CU928158">
    <property type="protein sequence ID" value="CAQ89145.1"/>
    <property type="molecule type" value="Genomic_DNA"/>
</dbReference>
<dbReference type="RefSeq" id="WP_000387363.1">
    <property type="nucleotide sequence ID" value="NC_011740.1"/>
</dbReference>
<dbReference type="SMR" id="B7LRV3"/>
<dbReference type="GeneID" id="75057331"/>
<dbReference type="KEGG" id="efe:EFER_1629"/>
<dbReference type="HOGENOM" id="CLU_007127_2_0_6"/>
<dbReference type="OrthoDB" id="9803484at2"/>
<dbReference type="Proteomes" id="UP000000745">
    <property type="component" value="Chromosome"/>
</dbReference>
<dbReference type="GO" id="GO:0005886">
    <property type="term" value="C:plasma membrane"/>
    <property type="evidence" value="ECO:0007669"/>
    <property type="project" value="UniProtKB-SubCell"/>
</dbReference>
<dbReference type="GO" id="GO:0050897">
    <property type="term" value="F:cobalt ion binding"/>
    <property type="evidence" value="ECO:0007669"/>
    <property type="project" value="TreeGrafter"/>
</dbReference>
<dbReference type="GO" id="GO:0015087">
    <property type="term" value="F:cobalt ion transmembrane transporter activity"/>
    <property type="evidence" value="ECO:0007669"/>
    <property type="project" value="TreeGrafter"/>
</dbReference>
<dbReference type="GO" id="GO:0000287">
    <property type="term" value="F:magnesium ion binding"/>
    <property type="evidence" value="ECO:0007669"/>
    <property type="project" value="TreeGrafter"/>
</dbReference>
<dbReference type="GO" id="GO:0015095">
    <property type="term" value="F:magnesium ion transmembrane transporter activity"/>
    <property type="evidence" value="ECO:0007669"/>
    <property type="project" value="TreeGrafter"/>
</dbReference>
<dbReference type="GO" id="GO:0005385">
    <property type="term" value="F:zinc ion transmembrane transporter activity"/>
    <property type="evidence" value="ECO:0007669"/>
    <property type="project" value="UniProtKB-UniRule"/>
</dbReference>
<dbReference type="CDD" id="cd12833">
    <property type="entry name" value="ZntB-like_1"/>
    <property type="match status" value="1"/>
</dbReference>
<dbReference type="FunFam" id="1.20.58.340:FF:000002">
    <property type="entry name" value="Zinc transport protein ZntB"/>
    <property type="match status" value="1"/>
</dbReference>
<dbReference type="FunFam" id="1.20.58.340:FF:000003">
    <property type="entry name" value="Zinc transport protein ZntB"/>
    <property type="match status" value="1"/>
</dbReference>
<dbReference type="Gene3D" id="3.30.460.20">
    <property type="entry name" value="CorA soluble domain-like"/>
    <property type="match status" value="1"/>
</dbReference>
<dbReference type="Gene3D" id="1.20.58.340">
    <property type="entry name" value="Magnesium transport protein CorA, transmembrane region"/>
    <property type="match status" value="2"/>
</dbReference>
<dbReference type="HAMAP" id="MF_01565">
    <property type="entry name" value="ZntB"/>
    <property type="match status" value="1"/>
</dbReference>
<dbReference type="InterPro" id="IPR045861">
    <property type="entry name" value="CorA_cytoplasmic_dom"/>
</dbReference>
<dbReference type="InterPro" id="IPR045863">
    <property type="entry name" value="CorA_TM1_TM2"/>
</dbReference>
<dbReference type="InterPro" id="IPR002523">
    <property type="entry name" value="MgTranspt_CorA/ZnTranspt_ZntB"/>
</dbReference>
<dbReference type="InterPro" id="IPR023714">
    <property type="entry name" value="Zn_transp_ZntB"/>
</dbReference>
<dbReference type="NCBIfam" id="NF007092">
    <property type="entry name" value="PRK09546.1"/>
    <property type="match status" value="1"/>
</dbReference>
<dbReference type="PANTHER" id="PTHR46494">
    <property type="entry name" value="CORA FAMILY METAL ION TRANSPORTER (EUROFUNG)"/>
    <property type="match status" value="1"/>
</dbReference>
<dbReference type="PANTHER" id="PTHR46494:SF3">
    <property type="entry name" value="ZINC TRANSPORT PROTEIN ZNTB"/>
    <property type="match status" value="1"/>
</dbReference>
<dbReference type="Pfam" id="PF01544">
    <property type="entry name" value="CorA"/>
    <property type="match status" value="1"/>
</dbReference>
<dbReference type="SUPFAM" id="SSF143865">
    <property type="entry name" value="CorA soluble domain-like"/>
    <property type="match status" value="1"/>
</dbReference>
<dbReference type="SUPFAM" id="SSF144083">
    <property type="entry name" value="Magnesium transport protein CorA, transmembrane region"/>
    <property type="match status" value="1"/>
</dbReference>
<accession>B7LRV3</accession>
<protein>
    <recommendedName>
        <fullName evidence="1">Zinc transport protein ZntB</fullName>
    </recommendedName>
</protein>
<comment type="function">
    <text evidence="1">Zinc transporter. Acts as a Zn(2+):proton symporter, which likely mediates zinc ion uptake.</text>
</comment>
<comment type="catalytic activity">
    <reaction evidence="1">
        <text>Zn(2+)(out) + H(+)(out) = Zn(2+)(in) + H(+)(in)</text>
        <dbReference type="Rhea" id="RHEA:71195"/>
        <dbReference type="ChEBI" id="CHEBI:15378"/>
        <dbReference type="ChEBI" id="CHEBI:29105"/>
    </reaction>
    <physiologicalReaction direction="left-to-right" evidence="1">
        <dbReference type="Rhea" id="RHEA:71196"/>
    </physiologicalReaction>
</comment>
<comment type="subcellular location">
    <subcellularLocation>
        <location evidence="1">Cell inner membrane</location>
        <topology evidence="1">Multi-pass membrane protein</topology>
    </subcellularLocation>
</comment>
<comment type="similarity">
    <text evidence="1">Belongs to the CorA metal ion transporter (MIT) (TC 1.A.35) family.</text>
</comment>
<sequence length="327" mass="36813">MEAIKGADVNVPDAVFAWILDRNGGVKPLTDNDVIDSEHPCWLHLNYTHPESAQWLATTPLLPNNVRDALAGESTRPRVNRMGEGTLITLRCINGSTDERPDQLVAMRVYMDERLIVSTRQRKVLALDDVVSDLEEGTGPEDCGGWLVDVCDALTDHASEFIEQLHDKIIDLEDNLLDQQIPPRGFLALLRKQLIVMRRYMAPQRDVYARLSSERLPWMNDDQRRRMQDIADRLGRGLDEIDACIARTGVMADEIAQVMQENLARRTYTMSLMAMVFLPSTFLTGLFGVNLGGIPGGGWRFGFSLFCILLVVLIGGVALWLHRSKWL</sequence>
<reference key="1">
    <citation type="journal article" date="2009" name="PLoS Genet.">
        <title>Organised genome dynamics in the Escherichia coli species results in highly diverse adaptive paths.</title>
        <authorList>
            <person name="Touchon M."/>
            <person name="Hoede C."/>
            <person name="Tenaillon O."/>
            <person name="Barbe V."/>
            <person name="Baeriswyl S."/>
            <person name="Bidet P."/>
            <person name="Bingen E."/>
            <person name="Bonacorsi S."/>
            <person name="Bouchier C."/>
            <person name="Bouvet O."/>
            <person name="Calteau A."/>
            <person name="Chiapello H."/>
            <person name="Clermont O."/>
            <person name="Cruveiller S."/>
            <person name="Danchin A."/>
            <person name="Diard M."/>
            <person name="Dossat C."/>
            <person name="Karoui M.E."/>
            <person name="Frapy E."/>
            <person name="Garry L."/>
            <person name="Ghigo J.M."/>
            <person name="Gilles A.M."/>
            <person name="Johnson J."/>
            <person name="Le Bouguenec C."/>
            <person name="Lescat M."/>
            <person name="Mangenot S."/>
            <person name="Martinez-Jehanne V."/>
            <person name="Matic I."/>
            <person name="Nassif X."/>
            <person name="Oztas S."/>
            <person name="Petit M.A."/>
            <person name="Pichon C."/>
            <person name="Rouy Z."/>
            <person name="Ruf C.S."/>
            <person name="Schneider D."/>
            <person name="Tourret J."/>
            <person name="Vacherie B."/>
            <person name="Vallenet D."/>
            <person name="Medigue C."/>
            <person name="Rocha E.P.C."/>
            <person name="Denamur E."/>
        </authorList>
    </citation>
    <scope>NUCLEOTIDE SEQUENCE [LARGE SCALE GENOMIC DNA]</scope>
    <source>
        <strain>ATCC 35469 / DSM 13698 / BCRC 15582 / CCUG 18766 / IAM 14443 / JCM 21226 / LMG 7866 / NBRC 102419 / NCTC 12128 / CDC 0568-73</strain>
    </source>
</reference>
<keyword id="KW-0997">Cell inner membrane</keyword>
<keyword id="KW-1003">Cell membrane</keyword>
<keyword id="KW-0406">Ion transport</keyword>
<keyword id="KW-0472">Membrane</keyword>
<keyword id="KW-0812">Transmembrane</keyword>
<keyword id="KW-1133">Transmembrane helix</keyword>
<keyword id="KW-0813">Transport</keyword>
<keyword id="KW-0862">Zinc</keyword>
<proteinExistence type="inferred from homology"/>
<evidence type="ECO:0000255" key="1">
    <source>
        <dbReference type="HAMAP-Rule" id="MF_01565"/>
    </source>
</evidence>
<organism>
    <name type="scientific">Escherichia fergusonii (strain ATCC 35469 / DSM 13698 / CCUG 18766 / IAM 14443 / JCM 21226 / LMG 7866 / NBRC 102419 / NCTC 12128 / CDC 0568-73)</name>
    <dbReference type="NCBI Taxonomy" id="585054"/>
    <lineage>
        <taxon>Bacteria</taxon>
        <taxon>Pseudomonadati</taxon>
        <taxon>Pseudomonadota</taxon>
        <taxon>Gammaproteobacteria</taxon>
        <taxon>Enterobacterales</taxon>
        <taxon>Enterobacteriaceae</taxon>
        <taxon>Escherichia</taxon>
    </lineage>
</organism>
<gene>
    <name evidence="1" type="primary">zntB</name>
    <name type="ordered locus">EFER_1629</name>
</gene>
<name>ZNTB_ESCF3</name>